<keyword id="KW-0030">Aminoacyl-tRNA synthetase</keyword>
<keyword id="KW-0067">ATP-binding</keyword>
<keyword id="KW-0963">Cytoplasm</keyword>
<keyword id="KW-0436">Ligase</keyword>
<keyword id="KW-0547">Nucleotide-binding</keyword>
<keyword id="KW-0648">Protein biosynthesis</keyword>
<keyword id="KW-1185">Reference proteome</keyword>
<feature type="chain" id="PRO_0000122080" description="Serine--tRNA ligase">
    <location>
        <begin position="1"/>
        <end position="421"/>
    </location>
</feature>
<feature type="binding site" evidence="1">
    <location>
        <begin position="232"/>
        <end position="234"/>
    </location>
    <ligand>
        <name>L-serine</name>
        <dbReference type="ChEBI" id="CHEBI:33384"/>
    </ligand>
</feature>
<feature type="binding site" evidence="1">
    <location>
        <begin position="262"/>
        <end position="264"/>
    </location>
    <ligand>
        <name>ATP</name>
        <dbReference type="ChEBI" id="CHEBI:30616"/>
    </ligand>
</feature>
<feature type="binding site" evidence="1">
    <location>
        <position position="285"/>
    </location>
    <ligand>
        <name>L-serine</name>
        <dbReference type="ChEBI" id="CHEBI:33384"/>
    </ligand>
</feature>
<feature type="binding site" evidence="1">
    <location>
        <begin position="349"/>
        <end position="352"/>
    </location>
    <ligand>
        <name>ATP</name>
        <dbReference type="ChEBI" id="CHEBI:30616"/>
    </ligand>
</feature>
<feature type="binding site" evidence="1">
    <location>
        <position position="384"/>
    </location>
    <ligand>
        <name>L-serine</name>
        <dbReference type="ChEBI" id="CHEBI:33384"/>
    </ligand>
</feature>
<name>SYS_MYCM1</name>
<gene>
    <name evidence="1" type="primary">serS</name>
    <name type="ordered locus">MMOB0920</name>
</gene>
<reference key="1">
    <citation type="journal article" date="2004" name="Genome Res.">
        <title>The complete genome and proteome of Mycoplasma mobile.</title>
        <authorList>
            <person name="Jaffe J.D."/>
            <person name="Stange-Thomann N."/>
            <person name="Smith C."/>
            <person name="DeCaprio D."/>
            <person name="Fisher S."/>
            <person name="Butler J."/>
            <person name="Calvo S."/>
            <person name="Elkins T."/>
            <person name="FitzGerald M.G."/>
            <person name="Hafez N."/>
            <person name="Kodira C.D."/>
            <person name="Major J."/>
            <person name="Wang S."/>
            <person name="Wilkinson J."/>
            <person name="Nicol R."/>
            <person name="Nusbaum C."/>
            <person name="Birren B."/>
            <person name="Berg H.C."/>
            <person name="Church G.M."/>
        </authorList>
    </citation>
    <scope>NUCLEOTIDE SEQUENCE [LARGE SCALE GENOMIC DNA]</scope>
    <source>
        <strain>ATCC 43663 / NCTC 11711 / 163 K</strain>
    </source>
</reference>
<organism>
    <name type="scientific">Mycoplasma mobile (strain ATCC 43663 / 163K / NCTC 11711)</name>
    <name type="common">Mesomycoplasma mobile</name>
    <dbReference type="NCBI Taxonomy" id="267748"/>
    <lineage>
        <taxon>Bacteria</taxon>
        <taxon>Bacillati</taxon>
        <taxon>Mycoplasmatota</taxon>
        <taxon>Mycoplasmoidales</taxon>
        <taxon>Metamycoplasmataceae</taxon>
        <taxon>Mesomycoplasma</taxon>
    </lineage>
</organism>
<protein>
    <recommendedName>
        <fullName evidence="1">Serine--tRNA ligase</fullName>
        <ecNumber evidence="1">6.1.1.11</ecNumber>
    </recommendedName>
    <alternativeName>
        <fullName evidence="1">Seryl-tRNA synthetase</fullName>
        <shortName evidence="1">SerRS</shortName>
    </alternativeName>
    <alternativeName>
        <fullName evidence="1">Seryl-tRNA(Ser/Sec) synthetase</fullName>
    </alternativeName>
</protein>
<accession>Q6KIJ8</accession>
<proteinExistence type="inferred from homology"/>
<dbReference type="EC" id="6.1.1.11" evidence="1"/>
<dbReference type="EMBL" id="AE017308">
    <property type="protein sequence ID" value="AAT27578.1"/>
    <property type="molecule type" value="Genomic_DNA"/>
</dbReference>
<dbReference type="RefSeq" id="WP_011264612.1">
    <property type="nucleotide sequence ID" value="NC_006908.1"/>
</dbReference>
<dbReference type="SMR" id="Q6KIJ8"/>
<dbReference type="STRING" id="267748.MMOB0920"/>
<dbReference type="KEGG" id="mmo:MMOB0920"/>
<dbReference type="eggNOG" id="COG0172">
    <property type="taxonomic scope" value="Bacteria"/>
</dbReference>
<dbReference type="HOGENOM" id="CLU_023797_1_1_14"/>
<dbReference type="OrthoDB" id="9804647at2"/>
<dbReference type="UniPathway" id="UPA00906">
    <property type="reaction ID" value="UER00895"/>
</dbReference>
<dbReference type="Proteomes" id="UP000009072">
    <property type="component" value="Chromosome"/>
</dbReference>
<dbReference type="GO" id="GO:0005737">
    <property type="term" value="C:cytoplasm"/>
    <property type="evidence" value="ECO:0007669"/>
    <property type="project" value="UniProtKB-SubCell"/>
</dbReference>
<dbReference type="GO" id="GO:0005524">
    <property type="term" value="F:ATP binding"/>
    <property type="evidence" value="ECO:0007669"/>
    <property type="project" value="UniProtKB-UniRule"/>
</dbReference>
<dbReference type="GO" id="GO:0004828">
    <property type="term" value="F:serine-tRNA ligase activity"/>
    <property type="evidence" value="ECO:0007669"/>
    <property type="project" value="UniProtKB-UniRule"/>
</dbReference>
<dbReference type="GO" id="GO:0016260">
    <property type="term" value="P:selenocysteine biosynthetic process"/>
    <property type="evidence" value="ECO:0007669"/>
    <property type="project" value="UniProtKB-UniRule"/>
</dbReference>
<dbReference type="GO" id="GO:0006434">
    <property type="term" value="P:seryl-tRNA aminoacylation"/>
    <property type="evidence" value="ECO:0007669"/>
    <property type="project" value="UniProtKB-UniRule"/>
</dbReference>
<dbReference type="CDD" id="cd00770">
    <property type="entry name" value="SerRS_core"/>
    <property type="match status" value="1"/>
</dbReference>
<dbReference type="Gene3D" id="3.30.930.10">
    <property type="entry name" value="Bira Bifunctional Protein, Domain 2"/>
    <property type="match status" value="1"/>
</dbReference>
<dbReference type="Gene3D" id="1.10.287.40">
    <property type="entry name" value="Serine-tRNA synthetase, tRNA binding domain"/>
    <property type="match status" value="1"/>
</dbReference>
<dbReference type="HAMAP" id="MF_00176">
    <property type="entry name" value="Ser_tRNA_synth_type1"/>
    <property type="match status" value="1"/>
</dbReference>
<dbReference type="InterPro" id="IPR002314">
    <property type="entry name" value="aa-tRNA-synt_IIb"/>
</dbReference>
<dbReference type="InterPro" id="IPR006195">
    <property type="entry name" value="aa-tRNA-synth_II"/>
</dbReference>
<dbReference type="InterPro" id="IPR045864">
    <property type="entry name" value="aa-tRNA-synth_II/BPL/LPL"/>
</dbReference>
<dbReference type="InterPro" id="IPR002317">
    <property type="entry name" value="Ser-tRNA-ligase_type_1"/>
</dbReference>
<dbReference type="InterPro" id="IPR015866">
    <property type="entry name" value="Ser-tRNA-synth_1_N"/>
</dbReference>
<dbReference type="InterPro" id="IPR042103">
    <property type="entry name" value="SerRS_1_N_sf"/>
</dbReference>
<dbReference type="InterPro" id="IPR033729">
    <property type="entry name" value="SerRS_core"/>
</dbReference>
<dbReference type="InterPro" id="IPR010978">
    <property type="entry name" value="tRNA-bd_arm"/>
</dbReference>
<dbReference type="NCBIfam" id="TIGR00414">
    <property type="entry name" value="serS"/>
    <property type="match status" value="1"/>
</dbReference>
<dbReference type="PANTHER" id="PTHR43697:SF1">
    <property type="entry name" value="SERINE--TRNA LIGASE"/>
    <property type="match status" value="1"/>
</dbReference>
<dbReference type="PANTHER" id="PTHR43697">
    <property type="entry name" value="SERYL-TRNA SYNTHETASE"/>
    <property type="match status" value="1"/>
</dbReference>
<dbReference type="Pfam" id="PF02403">
    <property type="entry name" value="Seryl_tRNA_N"/>
    <property type="match status" value="1"/>
</dbReference>
<dbReference type="Pfam" id="PF00587">
    <property type="entry name" value="tRNA-synt_2b"/>
    <property type="match status" value="1"/>
</dbReference>
<dbReference type="PIRSF" id="PIRSF001529">
    <property type="entry name" value="Ser-tRNA-synth_IIa"/>
    <property type="match status" value="1"/>
</dbReference>
<dbReference type="PRINTS" id="PR00981">
    <property type="entry name" value="TRNASYNTHSER"/>
</dbReference>
<dbReference type="SUPFAM" id="SSF55681">
    <property type="entry name" value="Class II aaRS and biotin synthetases"/>
    <property type="match status" value="1"/>
</dbReference>
<dbReference type="SUPFAM" id="SSF46589">
    <property type="entry name" value="tRNA-binding arm"/>
    <property type="match status" value="1"/>
</dbReference>
<dbReference type="PROSITE" id="PS50862">
    <property type="entry name" value="AA_TRNA_LIGASE_II"/>
    <property type="match status" value="1"/>
</dbReference>
<evidence type="ECO:0000255" key="1">
    <source>
        <dbReference type="HAMAP-Rule" id="MF_00176"/>
    </source>
</evidence>
<sequence length="421" mass="48180">MLDIKLILKNKDFVISKLKQRSNFNVSEIEKLYTLGTERANILISLSELQSKRNEISSKIGEAKRNKTDALFFMDEVENIKKELSILEEKSTKIENKIQELISFIPNIPLDDVPFGKDDTDNVILKEFPKIGRGLVKAKKPHYEIGVEKDLIDFSRGAKLSGSRFIVYKNAGAKLIRALESFMLDTHEKNGYSEIMPPFLVNSKMMYGTGQLPKFKEDLFKIEGHDLYLIPTAEVPVTNLFNNEIIDLEKNSKFSSFTNCFRSEAGSAGRDTKGIIRLHQFNKVELVEFASEQKSLRAFNSVLKNAKYLLELLEIPYREVLLCTGDLGFSSRKTIDLELWLPSEQRYREVSSVSYFGDFQSRRSMIRYRDENKNTQYVHTINGSGLAIDRVLAAILEQYQNDDGSISVPKVLIPYLNVEKI</sequence>
<comment type="function">
    <text evidence="1">Catalyzes the attachment of serine to tRNA(Ser). Is also able to aminoacylate tRNA(Sec) with serine, to form the misacylated tRNA L-seryl-tRNA(Sec), which will be further converted into selenocysteinyl-tRNA(Sec).</text>
</comment>
<comment type="catalytic activity">
    <reaction evidence="1">
        <text>tRNA(Ser) + L-serine + ATP = L-seryl-tRNA(Ser) + AMP + diphosphate + H(+)</text>
        <dbReference type="Rhea" id="RHEA:12292"/>
        <dbReference type="Rhea" id="RHEA-COMP:9669"/>
        <dbReference type="Rhea" id="RHEA-COMP:9703"/>
        <dbReference type="ChEBI" id="CHEBI:15378"/>
        <dbReference type="ChEBI" id="CHEBI:30616"/>
        <dbReference type="ChEBI" id="CHEBI:33019"/>
        <dbReference type="ChEBI" id="CHEBI:33384"/>
        <dbReference type="ChEBI" id="CHEBI:78442"/>
        <dbReference type="ChEBI" id="CHEBI:78533"/>
        <dbReference type="ChEBI" id="CHEBI:456215"/>
        <dbReference type="EC" id="6.1.1.11"/>
    </reaction>
</comment>
<comment type="catalytic activity">
    <reaction evidence="1">
        <text>tRNA(Sec) + L-serine + ATP = L-seryl-tRNA(Sec) + AMP + diphosphate + H(+)</text>
        <dbReference type="Rhea" id="RHEA:42580"/>
        <dbReference type="Rhea" id="RHEA-COMP:9742"/>
        <dbReference type="Rhea" id="RHEA-COMP:10128"/>
        <dbReference type="ChEBI" id="CHEBI:15378"/>
        <dbReference type="ChEBI" id="CHEBI:30616"/>
        <dbReference type="ChEBI" id="CHEBI:33019"/>
        <dbReference type="ChEBI" id="CHEBI:33384"/>
        <dbReference type="ChEBI" id="CHEBI:78442"/>
        <dbReference type="ChEBI" id="CHEBI:78533"/>
        <dbReference type="ChEBI" id="CHEBI:456215"/>
        <dbReference type="EC" id="6.1.1.11"/>
    </reaction>
</comment>
<comment type="pathway">
    <text evidence="1">Aminoacyl-tRNA biosynthesis; selenocysteinyl-tRNA(Sec) biosynthesis; L-seryl-tRNA(Sec) from L-serine and tRNA(Sec): step 1/1.</text>
</comment>
<comment type="subunit">
    <text evidence="1">Homodimer. The tRNA molecule binds across the dimer.</text>
</comment>
<comment type="subcellular location">
    <subcellularLocation>
        <location evidence="1">Cytoplasm</location>
    </subcellularLocation>
</comment>
<comment type="domain">
    <text evidence="1">Consists of two distinct domains, a catalytic core and a N-terminal extension that is involved in tRNA binding.</text>
</comment>
<comment type="similarity">
    <text evidence="1">Belongs to the class-II aminoacyl-tRNA synthetase family. Type-1 seryl-tRNA synthetase subfamily.</text>
</comment>